<proteinExistence type="evidence at protein level"/>
<name>I18BP_MOUSE</name>
<feature type="signal peptide" evidence="5">
    <location>
        <begin position="1"/>
        <end position="28"/>
    </location>
</feature>
<feature type="chain" id="PRO_0000014779" description="Interleukin-18-binding protein">
    <location>
        <begin position="29"/>
        <end position="193"/>
    </location>
</feature>
<feature type="domain" description="Ig-like C2-type">
    <location>
        <begin position="60"/>
        <end position="161"/>
    </location>
</feature>
<feature type="region of interest" description="Disordered" evidence="4">
    <location>
        <begin position="172"/>
        <end position="193"/>
    </location>
</feature>
<feature type="compositionally biased region" description="Polar residues" evidence="4">
    <location>
        <begin position="172"/>
        <end position="185"/>
    </location>
</feature>
<feature type="glycosylation site" description="N-linked (GlcNAc...) asparagine" evidence="2">
    <location>
        <position position="74"/>
    </location>
</feature>
<feature type="glycosylation site" description="N-linked (GlcNAc...) asparagine" evidence="2">
    <location>
        <position position="98"/>
    </location>
</feature>
<feature type="glycosylation site" description="N-linked (GlcNAc...) asparagine" evidence="2">
    <location>
        <position position="120"/>
    </location>
</feature>
<feature type="glycosylation site" description="N-linked (GlcNAc...) asparagine" evidence="2">
    <location>
        <position position="142"/>
    </location>
</feature>
<feature type="disulfide bond" evidence="3">
    <location>
        <begin position="81"/>
        <end position="145"/>
    </location>
</feature>
<feature type="sequence conflict" description="In Ref. 2; AAD17194, 5; CAJ18542 and 7; AAH18332." evidence="6" ref="2 5 7">
    <original>S</original>
    <variation>P</variation>
    <location>
        <position position="172"/>
    </location>
</feature>
<accession>Q9Z0M9</accession>
<accession>Q4FJR8</accession>
<accession>Q4FK87</accession>
<accession>Q9CV30</accession>
<accession>Q9QUH2</accession>
<accession>Q9Z0N0</accession>
<comment type="function">
    <text evidence="1">Binds to IL-18 and inhibits its activity. Functions as an inhibitor of the early TH1 cytokine response (By similarity).</text>
</comment>
<comment type="subcellular location">
    <subcellularLocation>
        <location evidence="6">Secreted</location>
    </subcellularLocation>
</comment>
<comment type="sequence caution" evidence="6">
    <conflict type="miscellaneous discrepancy">
        <sequence resource="EMBL-CDS" id="AAD17193"/>
    </conflict>
    <text>Intron retention.</text>
</comment>
<comment type="sequence caution" evidence="6">
    <conflict type="erroneous initiation">
        <sequence resource="EMBL-CDS" id="AAD17194"/>
    </conflict>
</comment>
<reference key="1">
    <citation type="journal article" date="1999" name="FEBS Lett.">
        <title>Cloning and expression of interleukin-18 binding protein.</title>
        <authorList>
            <person name="Aizawa Y."/>
            <person name="Akita K."/>
            <person name="Taniai M."/>
            <person name="Torigoe K."/>
            <person name="Mori T."/>
            <person name="Nishida Y."/>
            <person name="Ushio S."/>
            <person name="Nukada Y."/>
            <person name="Tanimoto T."/>
            <person name="Ikegami H."/>
            <person name="Ikeda M."/>
            <person name="Kurimoto M."/>
        </authorList>
    </citation>
    <scope>NUCLEOTIDE SEQUENCE [MRNA]</scope>
    <scope>PROTEIN SEQUENCE OF 29-33; 53-56; 94-139; 157-160 AND 164-169</scope>
    <source>
        <strain>CD-1</strain>
        <tissue>Serum</tissue>
    </source>
</reference>
<reference key="2">
    <citation type="journal article" date="1999" name="Immunity">
        <title>Interleukin-18 binding protein: a novel modulator of the Th1 cytokine response.</title>
        <authorList>
            <person name="Novick D."/>
            <person name="Kim S.-H."/>
            <person name="Fantuzzi G."/>
            <person name="Reznikov L.L."/>
            <person name="Dinarello C.A."/>
            <person name="Rubinstein M."/>
        </authorList>
    </citation>
    <scope>NUCLEOTIDE SEQUENCE [MRNA]</scope>
</reference>
<reference key="3">
    <citation type="journal article" date="1999" name="Virology">
        <title>Identification of human and mouse homologs of the MC51L-53L-54L family of secreted glycoproteins encoded by the Molluscum contagiosum poxvirus.</title>
        <authorList>
            <person name="Xiang Y."/>
            <person name="Moss B."/>
        </authorList>
    </citation>
    <scope>NUCLEOTIDE SEQUENCE [MRNA]</scope>
    <source>
        <tissue>Skin</tissue>
    </source>
</reference>
<reference key="4">
    <citation type="journal article" date="2005" name="Science">
        <title>The transcriptional landscape of the mammalian genome.</title>
        <authorList>
            <person name="Carninci P."/>
            <person name="Kasukawa T."/>
            <person name="Katayama S."/>
            <person name="Gough J."/>
            <person name="Frith M.C."/>
            <person name="Maeda N."/>
            <person name="Oyama R."/>
            <person name="Ravasi T."/>
            <person name="Lenhard B."/>
            <person name="Wells C."/>
            <person name="Kodzius R."/>
            <person name="Shimokawa K."/>
            <person name="Bajic V.B."/>
            <person name="Brenner S.E."/>
            <person name="Batalov S."/>
            <person name="Forrest A.R."/>
            <person name="Zavolan M."/>
            <person name="Davis M.J."/>
            <person name="Wilming L.G."/>
            <person name="Aidinis V."/>
            <person name="Allen J.E."/>
            <person name="Ambesi-Impiombato A."/>
            <person name="Apweiler R."/>
            <person name="Aturaliya R.N."/>
            <person name="Bailey T.L."/>
            <person name="Bansal M."/>
            <person name="Baxter L."/>
            <person name="Beisel K.W."/>
            <person name="Bersano T."/>
            <person name="Bono H."/>
            <person name="Chalk A.M."/>
            <person name="Chiu K.P."/>
            <person name="Choudhary V."/>
            <person name="Christoffels A."/>
            <person name="Clutterbuck D.R."/>
            <person name="Crowe M.L."/>
            <person name="Dalla E."/>
            <person name="Dalrymple B.P."/>
            <person name="de Bono B."/>
            <person name="Della Gatta G."/>
            <person name="di Bernardo D."/>
            <person name="Down T."/>
            <person name="Engstrom P."/>
            <person name="Fagiolini M."/>
            <person name="Faulkner G."/>
            <person name="Fletcher C.F."/>
            <person name="Fukushima T."/>
            <person name="Furuno M."/>
            <person name="Futaki S."/>
            <person name="Gariboldi M."/>
            <person name="Georgii-Hemming P."/>
            <person name="Gingeras T.R."/>
            <person name="Gojobori T."/>
            <person name="Green R.E."/>
            <person name="Gustincich S."/>
            <person name="Harbers M."/>
            <person name="Hayashi Y."/>
            <person name="Hensch T.K."/>
            <person name="Hirokawa N."/>
            <person name="Hill D."/>
            <person name="Huminiecki L."/>
            <person name="Iacono M."/>
            <person name="Ikeo K."/>
            <person name="Iwama A."/>
            <person name="Ishikawa T."/>
            <person name="Jakt M."/>
            <person name="Kanapin A."/>
            <person name="Katoh M."/>
            <person name="Kawasawa Y."/>
            <person name="Kelso J."/>
            <person name="Kitamura H."/>
            <person name="Kitano H."/>
            <person name="Kollias G."/>
            <person name="Krishnan S.P."/>
            <person name="Kruger A."/>
            <person name="Kummerfeld S.K."/>
            <person name="Kurochkin I.V."/>
            <person name="Lareau L.F."/>
            <person name="Lazarevic D."/>
            <person name="Lipovich L."/>
            <person name="Liu J."/>
            <person name="Liuni S."/>
            <person name="McWilliam S."/>
            <person name="Madan Babu M."/>
            <person name="Madera M."/>
            <person name="Marchionni L."/>
            <person name="Matsuda H."/>
            <person name="Matsuzawa S."/>
            <person name="Miki H."/>
            <person name="Mignone F."/>
            <person name="Miyake S."/>
            <person name="Morris K."/>
            <person name="Mottagui-Tabar S."/>
            <person name="Mulder N."/>
            <person name="Nakano N."/>
            <person name="Nakauchi H."/>
            <person name="Ng P."/>
            <person name="Nilsson R."/>
            <person name="Nishiguchi S."/>
            <person name="Nishikawa S."/>
            <person name="Nori F."/>
            <person name="Ohara O."/>
            <person name="Okazaki Y."/>
            <person name="Orlando V."/>
            <person name="Pang K.C."/>
            <person name="Pavan W.J."/>
            <person name="Pavesi G."/>
            <person name="Pesole G."/>
            <person name="Petrovsky N."/>
            <person name="Piazza S."/>
            <person name="Reed J."/>
            <person name="Reid J.F."/>
            <person name="Ring B.Z."/>
            <person name="Ringwald M."/>
            <person name="Rost B."/>
            <person name="Ruan Y."/>
            <person name="Salzberg S.L."/>
            <person name="Sandelin A."/>
            <person name="Schneider C."/>
            <person name="Schoenbach C."/>
            <person name="Sekiguchi K."/>
            <person name="Semple C.A."/>
            <person name="Seno S."/>
            <person name="Sessa L."/>
            <person name="Sheng Y."/>
            <person name="Shibata Y."/>
            <person name="Shimada H."/>
            <person name="Shimada K."/>
            <person name="Silva D."/>
            <person name="Sinclair B."/>
            <person name="Sperling S."/>
            <person name="Stupka E."/>
            <person name="Sugiura K."/>
            <person name="Sultana R."/>
            <person name="Takenaka Y."/>
            <person name="Taki K."/>
            <person name="Tammoja K."/>
            <person name="Tan S.L."/>
            <person name="Tang S."/>
            <person name="Taylor M.S."/>
            <person name="Tegner J."/>
            <person name="Teichmann S.A."/>
            <person name="Ueda H.R."/>
            <person name="van Nimwegen E."/>
            <person name="Verardo R."/>
            <person name="Wei C.L."/>
            <person name="Yagi K."/>
            <person name="Yamanishi H."/>
            <person name="Zabarovsky E."/>
            <person name="Zhu S."/>
            <person name="Zimmer A."/>
            <person name="Hide W."/>
            <person name="Bult C."/>
            <person name="Grimmond S.M."/>
            <person name="Teasdale R.D."/>
            <person name="Liu E.T."/>
            <person name="Brusic V."/>
            <person name="Quackenbush J."/>
            <person name="Wahlestedt C."/>
            <person name="Mattick J.S."/>
            <person name="Hume D.A."/>
            <person name="Kai C."/>
            <person name="Sasaki D."/>
            <person name="Tomaru Y."/>
            <person name="Fukuda S."/>
            <person name="Kanamori-Katayama M."/>
            <person name="Suzuki M."/>
            <person name="Aoki J."/>
            <person name="Arakawa T."/>
            <person name="Iida J."/>
            <person name="Imamura K."/>
            <person name="Itoh M."/>
            <person name="Kato T."/>
            <person name="Kawaji H."/>
            <person name="Kawagashira N."/>
            <person name="Kawashima T."/>
            <person name="Kojima M."/>
            <person name="Kondo S."/>
            <person name="Konno H."/>
            <person name="Nakano K."/>
            <person name="Ninomiya N."/>
            <person name="Nishio T."/>
            <person name="Okada M."/>
            <person name="Plessy C."/>
            <person name="Shibata K."/>
            <person name="Shiraki T."/>
            <person name="Suzuki S."/>
            <person name="Tagami M."/>
            <person name="Waki K."/>
            <person name="Watahiki A."/>
            <person name="Okamura-Oho Y."/>
            <person name="Suzuki H."/>
            <person name="Kawai J."/>
            <person name="Hayashizaki Y."/>
        </authorList>
    </citation>
    <scope>NUCLEOTIDE SEQUENCE [LARGE SCALE MRNA]</scope>
    <source>
        <strain>C57BL/6J</strain>
        <tissue>Embryo</tissue>
        <tissue>Small intestine</tissue>
        <tissue>Tongue</tissue>
    </source>
</reference>
<reference key="5">
    <citation type="submission" date="2005-07" db="EMBL/GenBank/DDBJ databases">
        <title>Cloning of mouse full open reading frames in Gateway(R) system entry vector (pDONR201).</title>
        <authorList>
            <person name="Ebert L."/>
            <person name="Muenstermann E."/>
            <person name="Schatten R."/>
            <person name="Henze S."/>
            <person name="Bohn E."/>
            <person name="Mollenhauer J."/>
            <person name="Wiemann S."/>
            <person name="Schick M."/>
            <person name="Korn B."/>
        </authorList>
    </citation>
    <scope>NUCLEOTIDE SEQUENCE [LARGE SCALE MRNA]</scope>
</reference>
<reference key="6">
    <citation type="submission" date="2005-07" db="EMBL/GenBank/DDBJ databases">
        <authorList>
            <person name="Mural R.J."/>
            <person name="Adams M.D."/>
            <person name="Myers E.W."/>
            <person name="Smith H.O."/>
            <person name="Venter J.C."/>
        </authorList>
    </citation>
    <scope>NUCLEOTIDE SEQUENCE [LARGE SCALE GENOMIC DNA]</scope>
</reference>
<reference key="7">
    <citation type="journal article" date="2004" name="Genome Res.">
        <title>The status, quality, and expansion of the NIH full-length cDNA project: the Mammalian Gene Collection (MGC).</title>
        <authorList>
            <consortium name="The MGC Project Team"/>
        </authorList>
    </citation>
    <scope>NUCLEOTIDE SEQUENCE [LARGE SCALE MRNA]</scope>
</reference>
<protein>
    <recommendedName>
        <fullName>Interleukin-18-binding protein</fullName>
        <shortName>IL-18BP</shortName>
    </recommendedName>
    <alternativeName>
        <fullName>Interferon gamma-inducing factor-binding protein</fullName>
    </alternativeName>
</protein>
<organism>
    <name type="scientific">Mus musculus</name>
    <name type="common">Mouse</name>
    <dbReference type="NCBI Taxonomy" id="10090"/>
    <lineage>
        <taxon>Eukaryota</taxon>
        <taxon>Metazoa</taxon>
        <taxon>Chordata</taxon>
        <taxon>Craniata</taxon>
        <taxon>Vertebrata</taxon>
        <taxon>Euteleostomi</taxon>
        <taxon>Mammalia</taxon>
        <taxon>Eutheria</taxon>
        <taxon>Euarchontoglires</taxon>
        <taxon>Glires</taxon>
        <taxon>Rodentia</taxon>
        <taxon>Myomorpha</taxon>
        <taxon>Muroidea</taxon>
        <taxon>Muridae</taxon>
        <taxon>Murinae</taxon>
        <taxon>Mus</taxon>
        <taxon>Mus</taxon>
    </lineage>
</organism>
<sequence length="193" mass="21257">MTMRHCWTAGPSSWWVLLLYVHVILARATSAPQTTATVLTGSSKDPCSSWSPAVPTKQYPALDVIWPEKEVPLNGTLTLSCTACSRFPYFSILYWLGNGSFIEHLPGRLKEGHTSREHRNTSTWLHRALVLEELSPTLRSTNFSCLFVDPGQVAQYHIILAQLWDGLKTAPSPSQETLSSHSPVSRSAGPGVA</sequence>
<keyword id="KW-0903">Direct protein sequencing</keyword>
<keyword id="KW-1015">Disulfide bond</keyword>
<keyword id="KW-0325">Glycoprotein</keyword>
<keyword id="KW-0393">Immunoglobulin domain</keyword>
<keyword id="KW-1185">Reference proteome</keyword>
<keyword id="KW-0964">Secreted</keyword>
<keyword id="KW-0732">Signal</keyword>
<dbReference type="EMBL" id="AB019505">
    <property type="protein sequence ID" value="BAA76375.1"/>
    <property type="molecule type" value="mRNA"/>
</dbReference>
<dbReference type="EMBL" id="AF110802">
    <property type="protein sequence ID" value="AAD17193.1"/>
    <property type="status" value="ALT_SEQ"/>
    <property type="molecule type" value="mRNA"/>
</dbReference>
<dbReference type="EMBL" id="AF110803">
    <property type="protein sequence ID" value="AAD17194.1"/>
    <property type="status" value="ALT_INIT"/>
    <property type="molecule type" value="mRNA"/>
</dbReference>
<dbReference type="EMBL" id="AF122907">
    <property type="protein sequence ID" value="AAD41052.1"/>
    <property type="molecule type" value="mRNA"/>
</dbReference>
<dbReference type="EMBL" id="AK009721">
    <property type="protein sequence ID" value="BAB26462.1"/>
    <property type="molecule type" value="mRNA"/>
</dbReference>
<dbReference type="EMBL" id="AK003370">
    <property type="protein sequence ID" value="BAB22744.1"/>
    <property type="molecule type" value="mRNA"/>
</dbReference>
<dbReference type="EMBL" id="AK008452">
    <property type="protein sequence ID" value="BAB25677.1"/>
    <property type="molecule type" value="mRNA"/>
</dbReference>
<dbReference type="EMBL" id="AK009877">
    <property type="protein sequence ID" value="BAB26558.1"/>
    <property type="molecule type" value="mRNA"/>
</dbReference>
<dbReference type="EMBL" id="CT010164">
    <property type="protein sequence ID" value="CAJ18372.1"/>
    <property type="molecule type" value="mRNA"/>
</dbReference>
<dbReference type="EMBL" id="CT010334">
    <property type="protein sequence ID" value="CAJ18542.1"/>
    <property type="molecule type" value="mRNA"/>
</dbReference>
<dbReference type="EMBL" id="CH466531">
    <property type="protein sequence ID" value="EDL16557.1"/>
    <property type="molecule type" value="Genomic_DNA"/>
</dbReference>
<dbReference type="EMBL" id="CH466531">
    <property type="protein sequence ID" value="EDL16558.1"/>
    <property type="molecule type" value="Genomic_DNA"/>
</dbReference>
<dbReference type="EMBL" id="CH466531">
    <property type="protein sequence ID" value="EDL16559.1"/>
    <property type="molecule type" value="Genomic_DNA"/>
</dbReference>
<dbReference type="EMBL" id="BC018332">
    <property type="protein sequence ID" value="AAH18332.1"/>
    <property type="molecule type" value="mRNA"/>
</dbReference>
<dbReference type="CCDS" id="CCDS21522.1"/>
<dbReference type="RefSeq" id="NP_001350911.1">
    <property type="nucleotide sequence ID" value="NM_001363982.1"/>
</dbReference>
<dbReference type="RefSeq" id="NP_001369387.1">
    <property type="nucleotide sequence ID" value="NM_001382458.1"/>
</dbReference>
<dbReference type="RefSeq" id="NP_034661.1">
    <property type="nucleotide sequence ID" value="NM_010531.2"/>
</dbReference>
<dbReference type="RefSeq" id="XP_030098020.1">
    <property type="nucleotide sequence ID" value="XM_030242160.2"/>
</dbReference>
<dbReference type="SMR" id="Q9Z0M9"/>
<dbReference type="FunCoup" id="Q9Z0M9">
    <property type="interactions" value="319"/>
</dbReference>
<dbReference type="STRING" id="10090.ENSMUSP00000148080"/>
<dbReference type="GlyCosmos" id="Q9Z0M9">
    <property type="glycosylation" value="4 sites, No reported glycans"/>
</dbReference>
<dbReference type="GlyGen" id="Q9Z0M9">
    <property type="glycosylation" value="4 sites"/>
</dbReference>
<dbReference type="PhosphoSitePlus" id="Q9Z0M9"/>
<dbReference type="CPTAC" id="non-CPTAC-3552"/>
<dbReference type="PaxDb" id="10090-ENSMUSP00000091685"/>
<dbReference type="PeptideAtlas" id="Q9Z0M9"/>
<dbReference type="ProteomicsDB" id="267078"/>
<dbReference type="Antibodypedia" id="30767">
    <property type="antibodies" value="473 antibodies from 34 providers"/>
</dbReference>
<dbReference type="DNASU" id="16068"/>
<dbReference type="Ensembl" id="ENSMUST00000094134.5">
    <property type="protein sequence ID" value="ENSMUSP00000091685.4"/>
    <property type="gene ID" value="ENSMUSG00000070427.5"/>
</dbReference>
<dbReference type="Ensembl" id="ENSMUST00000209844.2">
    <property type="protein sequence ID" value="ENSMUSP00000148080.2"/>
    <property type="gene ID" value="ENSMUSG00000070427.5"/>
</dbReference>
<dbReference type="GeneID" id="16068"/>
<dbReference type="KEGG" id="mmu:16068"/>
<dbReference type="UCSC" id="uc009iqd.1">
    <property type="organism name" value="mouse"/>
</dbReference>
<dbReference type="AGR" id="MGI:1333800"/>
<dbReference type="CTD" id="10068"/>
<dbReference type="MGI" id="MGI:1333800">
    <property type="gene designation" value="Il18bp"/>
</dbReference>
<dbReference type="VEuPathDB" id="HostDB:ENSMUSG00000070427"/>
<dbReference type="eggNOG" id="ENOG502SYZY">
    <property type="taxonomic scope" value="Eukaryota"/>
</dbReference>
<dbReference type="GeneTree" id="ENSGT00390000004026"/>
<dbReference type="HOGENOM" id="CLU_131866_0_0_1"/>
<dbReference type="InParanoid" id="Q9Z0M9"/>
<dbReference type="OMA" id="PTAKQCP"/>
<dbReference type="PhylomeDB" id="Q9Z0M9"/>
<dbReference type="TreeFam" id="TF337962"/>
<dbReference type="Reactome" id="R-MMU-9012546">
    <property type="pathway name" value="Interleukin-18 signaling"/>
</dbReference>
<dbReference type="BioGRID-ORCS" id="16068">
    <property type="hits" value="4 hits in 76 CRISPR screens"/>
</dbReference>
<dbReference type="ChiTaRS" id="Il18bp">
    <property type="organism name" value="mouse"/>
</dbReference>
<dbReference type="PRO" id="PR:Q9Z0M9"/>
<dbReference type="Proteomes" id="UP000000589">
    <property type="component" value="Chromosome 7"/>
</dbReference>
<dbReference type="RNAct" id="Q9Z0M9">
    <property type="molecule type" value="protein"/>
</dbReference>
<dbReference type="Bgee" id="ENSMUSG00000070427">
    <property type="expression patterns" value="Expressed in granulocyte and 134 other cell types or tissues"/>
</dbReference>
<dbReference type="ExpressionAtlas" id="Q9Z0M9">
    <property type="expression patterns" value="baseline and differential"/>
</dbReference>
<dbReference type="GO" id="GO:0005576">
    <property type="term" value="C:extracellular region"/>
    <property type="evidence" value="ECO:0007669"/>
    <property type="project" value="UniProtKB-SubCell"/>
</dbReference>
<dbReference type="GO" id="GO:0042007">
    <property type="term" value="F:interleukin-18 binding"/>
    <property type="evidence" value="ECO:0000250"/>
    <property type="project" value="UniProtKB"/>
</dbReference>
<dbReference type="GO" id="GO:0042088">
    <property type="term" value="P:T-helper 1 type immune response"/>
    <property type="evidence" value="ECO:0000250"/>
    <property type="project" value="UniProtKB"/>
</dbReference>
<dbReference type="FunFam" id="2.60.40.10:FF:001297">
    <property type="entry name" value="Interleukin 18 binding protein"/>
    <property type="match status" value="1"/>
</dbReference>
<dbReference type="Gene3D" id="2.60.40.10">
    <property type="entry name" value="Immunoglobulins"/>
    <property type="match status" value="1"/>
</dbReference>
<dbReference type="InterPro" id="IPR007110">
    <property type="entry name" value="Ig-like_dom"/>
</dbReference>
<dbReference type="InterPro" id="IPR036179">
    <property type="entry name" value="Ig-like_dom_sf"/>
</dbReference>
<dbReference type="InterPro" id="IPR013783">
    <property type="entry name" value="Ig-like_fold"/>
</dbReference>
<dbReference type="InterPro" id="IPR039681">
    <property type="entry name" value="IL18BP"/>
</dbReference>
<dbReference type="InterPro" id="IPR055139">
    <property type="entry name" value="IL18BP-like_dom"/>
</dbReference>
<dbReference type="PANTHER" id="PTHR14292">
    <property type="entry name" value="INTERLEUKIN-18-BINDING PROTEIN"/>
    <property type="match status" value="1"/>
</dbReference>
<dbReference type="PANTHER" id="PTHR14292:SF2">
    <property type="entry name" value="INTERLEUKIN-18-BINDING PROTEIN"/>
    <property type="match status" value="1"/>
</dbReference>
<dbReference type="Pfam" id="PF22009">
    <property type="entry name" value="YLDV-IL18BP-like"/>
    <property type="match status" value="1"/>
</dbReference>
<dbReference type="SUPFAM" id="SSF48726">
    <property type="entry name" value="Immunoglobulin"/>
    <property type="match status" value="1"/>
</dbReference>
<dbReference type="PROSITE" id="PS50835">
    <property type="entry name" value="IG_LIKE"/>
    <property type="match status" value="1"/>
</dbReference>
<gene>
    <name type="primary">Il18bp</name>
    <name type="synonym">Igifbp</name>
</gene>
<evidence type="ECO:0000250" key="1"/>
<evidence type="ECO:0000255" key="2"/>
<evidence type="ECO:0000255" key="3">
    <source>
        <dbReference type="PROSITE-ProRule" id="PRU00114"/>
    </source>
</evidence>
<evidence type="ECO:0000256" key="4">
    <source>
        <dbReference type="SAM" id="MobiDB-lite"/>
    </source>
</evidence>
<evidence type="ECO:0000269" key="5">
    <source>
    </source>
</evidence>
<evidence type="ECO:0000305" key="6"/>